<sequence length="354" mass="40399">MKLQTTYPSNNYPIYVERGAIDHISTYIDQFDQSFILIDEYVNQYFANKFDDILSYENVHKVIIPAGEKTKTFHQYQETLEYILSHHVTRNTAIIAVGGGATGDFAGFVAATLLRGVHFIQVPTTILAHDSSVGGKVGINSKQGKNLIGAFYRPTAVIYDLDFLKTLPFEQILSGYAEVYKHALLNGESTTQEIEQHFKDREILQSLNGMDKYIAKGIETKLDIVVADEKEQGVRKFLNLGHTFGHAVEYYHKIPHGHAVMVGIIYQFIVANALFDSKHEINHYIQYLIQLGYPLDMITDLDFETLYEYMLSDKKNDKQGVQMVLIRQFGDIVVQHVDQLTLQHACEQLKTYFK</sequence>
<organism>
    <name type="scientific">Staphylococcus aureus (strain MSSA476)</name>
    <dbReference type="NCBI Taxonomy" id="282459"/>
    <lineage>
        <taxon>Bacteria</taxon>
        <taxon>Bacillati</taxon>
        <taxon>Bacillota</taxon>
        <taxon>Bacilli</taxon>
        <taxon>Bacillales</taxon>
        <taxon>Staphylococcaceae</taxon>
        <taxon>Staphylococcus</taxon>
    </lineage>
</organism>
<accession>Q6G997</accession>
<protein>
    <recommendedName>
        <fullName evidence="1">3-dehydroquinate synthase</fullName>
        <shortName evidence="1">DHQS</shortName>
        <ecNumber evidence="1">4.2.3.4</ecNumber>
    </recommendedName>
</protein>
<gene>
    <name evidence="1" type="primary">aroB</name>
    <name type="ordered locus">SAS1408</name>
</gene>
<reference key="1">
    <citation type="journal article" date="2004" name="Proc. Natl. Acad. Sci. U.S.A.">
        <title>Complete genomes of two clinical Staphylococcus aureus strains: evidence for the rapid evolution of virulence and drug resistance.</title>
        <authorList>
            <person name="Holden M.T.G."/>
            <person name="Feil E.J."/>
            <person name="Lindsay J.A."/>
            <person name="Peacock S.J."/>
            <person name="Day N.P.J."/>
            <person name="Enright M.C."/>
            <person name="Foster T.J."/>
            <person name="Moore C.E."/>
            <person name="Hurst L."/>
            <person name="Atkin R."/>
            <person name="Barron A."/>
            <person name="Bason N."/>
            <person name="Bentley S.D."/>
            <person name="Chillingworth C."/>
            <person name="Chillingworth T."/>
            <person name="Churcher C."/>
            <person name="Clark L."/>
            <person name="Corton C."/>
            <person name="Cronin A."/>
            <person name="Doggett J."/>
            <person name="Dowd L."/>
            <person name="Feltwell T."/>
            <person name="Hance Z."/>
            <person name="Harris B."/>
            <person name="Hauser H."/>
            <person name="Holroyd S."/>
            <person name="Jagels K."/>
            <person name="James K.D."/>
            <person name="Lennard N."/>
            <person name="Line A."/>
            <person name="Mayes R."/>
            <person name="Moule S."/>
            <person name="Mungall K."/>
            <person name="Ormond D."/>
            <person name="Quail M.A."/>
            <person name="Rabbinowitsch E."/>
            <person name="Rutherford K.M."/>
            <person name="Sanders M."/>
            <person name="Sharp S."/>
            <person name="Simmonds M."/>
            <person name="Stevens K."/>
            <person name="Whitehead S."/>
            <person name="Barrell B.G."/>
            <person name="Spratt B.G."/>
            <person name="Parkhill J."/>
        </authorList>
    </citation>
    <scope>NUCLEOTIDE SEQUENCE [LARGE SCALE GENOMIC DNA]</scope>
    <source>
        <strain>MSSA476</strain>
    </source>
</reference>
<name>AROB_STAAS</name>
<comment type="function">
    <text evidence="1">Catalyzes the conversion of 3-deoxy-D-arabino-heptulosonate 7-phosphate (DAHP) to dehydroquinate (DHQ).</text>
</comment>
<comment type="catalytic activity">
    <reaction evidence="1">
        <text>7-phospho-2-dehydro-3-deoxy-D-arabino-heptonate = 3-dehydroquinate + phosphate</text>
        <dbReference type="Rhea" id="RHEA:21968"/>
        <dbReference type="ChEBI" id="CHEBI:32364"/>
        <dbReference type="ChEBI" id="CHEBI:43474"/>
        <dbReference type="ChEBI" id="CHEBI:58394"/>
        <dbReference type="EC" id="4.2.3.4"/>
    </reaction>
</comment>
<comment type="cofactor">
    <cofactor evidence="1">
        <name>NAD(+)</name>
        <dbReference type="ChEBI" id="CHEBI:57540"/>
    </cofactor>
</comment>
<comment type="cofactor">
    <cofactor evidence="1">
        <name>Co(2+)</name>
        <dbReference type="ChEBI" id="CHEBI:48828"/>
    </cofactor>
    <cofactor evidence="1">
        <name>Zn(2+)</name>
        <dbReference type="ChEBI" id="CHEBI:29105"/>
    </cofactor>
    <text evidence="1">Binds 1 divalent metal cation per subunit. Can use either Co(2+) or Zn(2+).</text>
</comment>
<comment type="pathway">
    <text evidence="1">Metabolic intermediate biosynthesis; chorismate biosynthesis; chorismate from D-erythrose 4-phosphate and phosphoenolpyruvate: step 2/7.</text>
</comment>
<comment type="subcellular location">
    <subcellularLocation>
        <location evidence="1">Cytoplasm</location>
    </subcellularLocation>
</comment>
<comment type="similarity">
    <text evidence="1">Belongs to the sugar phosphate cyclases superfamily. Dehydroquinate synthase family.</text>
</comment>
<proteinExistence type="inferred from homology"/>
<keyword id="KW-0028">Amino-acid biosynthesis</keyword>
<keyword id="KW-0057">Aromatic amino acid biosynthesis</keyword>
<keyword id="KW-0170">Cobalt</keyword>
<keyword id="KW-0963">Cytoplasm</keyword>
<keyword id="KW-0456">Lyase</keyword>
<keyword id="KW-0479">Metal-binding</keyword>
<keyword id="KW-0520">NAD</keyword>
<keyword id="KW-0547">Nucleotide-binding</keyword>
<keyword id="KW-0862">Zinc</keyword>
<evidence type="ECO:0000255" key="1">
    <source>
        <dbReference type="HAMAP-Rule" id="MF_00110"/>
    </source>
</evidence>
<feature type="chain" id="PRO_0000140783" description="3-dehydroquinate synthase">
    <location>
        <begin position="1"/>
        <end position="354"/>
    </location>
</feature>
<feature type="binding site" evidence="1">
    <location>
        <begin position="100"/>
        <end position="104"/>
    </location>
    <ligand>
        <name>NAD(+)</name>
        <dbReference type="ChEBI" id="CHEBI:57540"/>
    </ligand>
</feature>
<feature type="binding site" evidence="1">
    <location>
        <begin position="124"/>
        <end position="125"/>
    </location>
    <ligand>
        <name>NAD(+)</name>
        <dbReference type="ChEBI" id="CHEBI:57540"/>
    </ligand>
</feature>
<feature type="binding site" evidence="1">
    <location>
        <position position="136"/>
    </location>
    <ligand>
        <name>NAD(+)</name>
        <dbReference type="ChEBI" id="CHEBI:57540"/>
    </ligand>
</feature>
<feature type="binding site" evidence="1">
    <location>
        <position position="145"/>
    </location>
    <ligand>
        <name>NAD(+)</name>
        <dbReference type="ChEBI" id="CHEBI:57540"/>
    </ligand>
</feature>
<feature type="binding site" evidence="1">
    <location>
        <begin position="163"/>
        <end position="166"/>
    </location>
    <ligand>
        <name>NAD(+)</name>
        <dbReference type="ChEBI" id="CHEBI:57540"/>
    </ligand>
</feature>
<feature type="binding site" evidence="1">
    <location>
        <position position="178"/>
    </location>
    <ligand>
        <name>Zn(2+)</name>
        <dbReference type="ChEBI" id="CHEBI:29105"/>
    </ligand>
</feature>
<feature type="binding site" evidence="1">
    <location>
        <position position="242"/>
    </location>
    <ligand>
        <name>Zn(2+)</name>
        <dbReference type="ChEBI" id="CHEBI:29105"/>
    </ligand>
</feature>
<feature type="binding site" evidence="1">
    <location>
        <position position="256"/>
    </location>
    <ligand>
        <name>Zn(2+)</name>
        <dbReference type="ChEBI" id="CHEBI:29105"/>
    </ligand>
</feature>
<dbReference type="EC" id="4.2.3.4" evidence="1"/>
<dbReference type="EMBL" id="BX571857">
    <property type="protein sequence ID" value="CAG43184.1"/>
    <property type="molecule type" value="Genomic_DNA"/>
</dbReference>
<dbReference type="RefSeq" id="WP_000776341.1">
    <property type="nucleotide sequence ID" value="NC_002953.3"/>
</dbReference>
<dbReference type="SMR" id="Q6G997"/>
<dbReference type="KEGG" id="sas:SAS1408"/>
<dbReference type="HOGENOM" id="CLU_001201_0_1_9"/>
<dbReference type="UniPathway" id="UPA00053">
    <property type="reaction ID" value="UER00085"/>
</dbReference>
<dbReference type="GO" id="GO:0005737">
    <property type="term" value="C:cytoplasm"/>
    <property type="evidence" value="ECO:0007669"/>
    <property type="project" value="UniProtKB-SubCell"/>
</dbReference>
<dbReference type="GO" id="GO:0003856">
    <property type="term" value="F:3-dehydroquinate synthase activity"/>
    <property type="evidence" value="ECO:0007669"/>
    <property type="project" value="UniProtKB-UniRule"/>
</dbReference>
<dbReference type="GO" id="GO:0046872">
    <property type="term" value="F:metal ion binding"/>
    <property type="evidence" value="ECO:0007669"/>
    <property type="project" value="UniProtKB-KW"/>
</dbReference>
<dbReference type="GO" id="GO:0000166">
    <property type="term" value="F:nucleotide binding"/>
    <property type="evidence" value="ECO:0007669"/>
    <property type="project" value="UniProtKB-KW"/>
</dbReference>
<dbReference type="GO" id="GO:0008652">
    <property type="term" value="P:amino acid biosynthetic process"/>
    <property type="evidence" value="ECO:0007669"/>
    <property type="project" value="UniProtKB-KW"/>
</dbReference>
<dbReference type="GO" id="GO:0009073">
    <property type="term" value="P:aromatic amino acid family biosynthetic process"/>
    <property type="evidence" value="ECO:0007669"/>
    <property type="project" value="UniProtKB-KW"/>
</dbReference>
<dbReference type="GO" id="GO:0009423">
    <property type="term" value="P:chorismate biosynthetic process"/>
    <property type="evidence" value="ECO:0007669"/>
    <property type="project" value="UniProtKB-UniRule"/>
</dbReference>
<dbReference type="CDD" id="cd08169">
    <property type="entry name" value="DHQ-like"/>
    <property type="match status" value="1"/>
</dbReference>
<dbReference type="FunFam" id="3.40.50.1970:FF:000019">
    <property type="entry name" value="3-dehydroquinate synthase"/>
    <property type="match status" value="1"/>
</dbReference>
<dbReference type="Gene3D" id="3.40.50.1970">
    <property type="match status" value="1"/>
</dbReference>
<dbReference type="Gene3D" id="1.20.1090.10">
    <property type="entry name" value="Dehydroquinate synthase-like - alpha domain"/>
    <property type="match status" value="1"/>
</dbReference>
<dbReference type="HAMAP" id="MF_00110">
    <property type="entry name" value="DHQ_synthase"/>
    <property type="match status" value="1"/>
</dbReference>
<dbReference type="InterPro" id="IPR050071">
    <property type="entry name" value="Dehydroquinate_synthase"/>
</dbReference>
<dbReference type="InterPro" id="IPR016037">
    <property type="entry name" value="DHQ_synth_AroB"/>
</dbReference>
<dbReference type="InterPro" id="IPR030963">
    <property type="entry name" value="DHQ_synth_fam"/>
</dbReference>
<dbReference type="InterPro" id="IPR030960">
    <property type="entry name" value="DHQS/DOIS_N"/>
</dbReference>
<dbReference type="InterPro" id="IPR056179">
    <property type="entry name" value="DHQS_C"/>
</dbReference>
<dbReference type="NCBIfam" id="TIGR01357">
    <property type="entry name" value="aroB"/>
    <property type="match status" value="1"/>
</dbReference>
<dbReference type="PANTHER" id="PTHR43622">
    <property type="entry name" value="3-DEHYDROQUINATE SYNTHASE"/>
    <property type="match status" value="1"/>
</dbReference>
<dbReference type="PANTHER" id="PTHR43622:SF7">
    <property type="entry name" value="3-DEHYDROQUINATE SYNTHASE, CHLOROPLASTIC"/>
    <property type="match status" value="1"/>
</dbReference>
<dbReference type="Pfam" id="PF01761">
    <property type="entry name" value="DHQ_synthase"/>
    <property type="match status" value="1"/>
</dbReference>
<dbReference type="Pfam" id="PF24621">
    <property type="entry name" value="DHQS_C"/>
    <property type="match status" value="1"/>
</dbReference>
<dbReference type="PIRSF" id="PIRSF001455">
    <property type="entry name" value="DHQ_synth"/>
    <property type="match status" value="1"/>
</dbReference>
<dbReference type="SUPFAM" id="SSF56796">
    <property type="entry name" value="Dehydroquinate synthase-like"/>
    <property type="match status" value="1"/>
</dbReference>